<protein>
    <recommendedName>
        <fullName evidence="1">Lipoyl synthase</fullName>
        <ecNumber evidence="1">2.8.1.8</ecNumber>
    </recommendedName>
    <alternativeName>
        <fullName evidence="1">Lip-syn</fullName>
        <shortName evidence="1">LS</shortName>
    </alternativeName>
    <alternativeName>
        <fullName evidence="1">Lipoate synthase</fullName>
    </alternativeName>
    <alternativeName>
        <fullName evidence="1">Lipoic acid synthase</fullName>
    </alternativeName>
    <alternativeName>
        <fullName evidence="1">Sulfur insertion protein LipA</fullName>
    </alternativeName>
</protein>
<organism>
    <name type="scientific">Salmonella paratyphi B (strain ATCC BAA-1250 / SPB7)</name>
    <dbReference type="NCBI Taxonomy" id="1016998"/>
    <lineage>
        <taxon>Bacteria</taxon>
        <taxon>Pseudomonadati</taxon>
        <taxon>Pseudomonadota</taxon>
        <taxon>Gammaproteobacteria</taxon>
        <taxon>Enterobacterales</taxon>
        <taxon>Enterobacteriaceae</taxon>
        <taxon>Salmonella</taxon>
    </lineage>
</organism>
<proteinExistence type="inferred from homology"/>
<comment type="function">
    <text evidence="1">Catalyzes the radical-mediated insertion of two sulfur atoms into the C-6 and C-8 positions of the octanoyl moiety bound to the lipoyl domains of lipoate-dependent enzymes, thereby converting the octanoylated domains into lipoylated derivatives.</text>
</comment>
<comment type="catalytic activity">
    <reaction evidence="1">
        <text>[[Fe-S] cluster scaffold protein carrying a second [4Fe-4S](2+) cluster] + N(6)-octanoyl-L-lysyl-[protein] + 2 oxidized [2Fe-2S]-[ferredoxin] + 2 S-adenosyl-L-methionine + 4 H(+) = [[Fe-S] cluster scaffold protein] + N(6)-[(R)-dihydrolipoyl]-L-lysyl-[protein] + 4 Fe(3+) + 2 hydrogen sulfide + 2 5'-deoxyadenosine + 2 L-methionine + 2 reduced [2Fe-2S]-[ferredoxin]</text>
        <dbReference type="Rhea" id="RHEA:16585"/>
        <dbReference type="Rhea" id="RHEA-COMP:9928"/>
        <dbReference type="Rhea" id="RHEA-COMP:10000"/>
        <dbReference type="Rhea" id="RHEA-COMP:10001"/>
        <dbReference type="Rhea" id="RHEA-COMP:10475"/>
        <dbReference type="Rhea" id="RHEA-COMP:14568"/>
        <dbReference type="Rhea" id="RHEA-COMP:14569"/>
        <dbReference type="ChEBI" id="CHEBI:15378"/>
        <dbReference type="ChEBI" id="CHEBI:17319"/>
        <dbReference type="ChEBI" id="CHEBI:29034"/>
        <dbReference type="ChEBI" id="CHEBI:29919"/>
        <dbReference type="ChEBI" id="CHEBI:33722"/>
        <dbReference type="ChEBI" id="CHEBI:33737"/>
        <dbReference type="ChEBI" id="CHEBI:33738"/>
        <dbReference type="ChEBI" id="CHEBI:57844"/>
        <dbReference type="ChEBI" id="CHEBI:59789"/>
        <dbReference type="ChEBI" id="CHEBI:78809"/>
        <dbReference type="ChEBI" id="CHEBI:83100"/>
        <dbReference type="EC" id="2.8.1.8"/>
    </reaction>
</comment>
<comment type="cofactor">
    <cofactor evidence="1">
        <name>[4Fe-4S] cluster</name>
        <dbReference type="ChEBI" id="CHEBI:49883"/>
    </cofactor>
    <text evidence="1">Binds 2 [4Fe-4S] clusters per subunit. One cluster is coordinated with 3 cysteines and an exchangeable S-adenosyl-L-methionine.</text>
</comment>
<comment type="pathway">
    <text evidence="1">Protein modification; protein lipoylation via endogenous pathway; protein N(6)-(lipoyl)lysine from octanoyl-[acyl-carrier-protein]: step 2/2.</text>
</comment>
<comment type="subcellular location">
    <subcellularLocation>
        <location evidence="1">Cytoplasm</location>
    </subcellularLocation>
</comment>
<comment type="similarity">
    <text evidence="1">Belongs to the radical SAM superfamily. Lipoyl synthase family.</text>
</comment>
<name>LIPA_SALPB</name>
<gene>
    <name evidence="1" type="primary">lipA</name>
    <name type="ordered locus">SPAB_02922</name>
</gene>
<reference key="1">
    <citation type="submission" date="2007-11" db="EMBL/GenBank/DDBJ databases">
        <authorList>
            <consortium name="The Salmonella enterica serovar Paratyphi B Genome Sequencing Project"/>
            <person name="McClelland M."/>
            <person name="Sanderson E.K."/>
            <person name="Porwollik S."/>
            <person name="Spieth J."/>
            <person name="Clifton W.S."/>
            <person name="Fulton R."/>
            <person name="Cordes M."/>
            <person name="Wollam A."/>
            <person name="Shah N."/>
            <person name="Pepin K."/>
            <person name="Bhonagiri V."/>
            <person name="Nash W."/>
            <person name="Johnson M."/>
            <person name="Thiruvilangam P."/>
            <person name="Wilson R."/>
        </authorList>
    </citation>
    <scope>NUCLEOTIDE SEQUENCE [LARGE SCALE GENOMIC DNA]</scope>
    <source>
        <strain>ATCC BAA-1250 / SPB7</strain>
    </source>
</reference>
<sequence length="321" mass="36042">MSKPIVMERGVKYRDADKMALIPVKNVVTERDALLRKPEWMKIKLPADSTRIQGIKAAMRKNGLHSVCEEASCPNLAECFNHGTATFMILGAICTRRCPFCDVAHGRPVAPDAEEPQKLAQTIADMALRYVVITSVDRDDLRDGGAQHFADCITAIRAKSPEIKIETLVPDFRGRMDRALDILNATPPDVFNHNLENVPRIYRQVRPGADYNWSLKLLERFKEAHPEIPTKSGLMVGLGETNAEIIEVMRDLRRHGVTMLTLGQYLQPSRHHLPVQRYVSPEEFDEMKAEALAMGFTHAACGPFVRSSYHADLQAKGMEVK</sequence>
<accession>A9MV74</accession>
<feature type="chain" id="PRO_1000077966" description="Lipoyl synthase">
    <location>
        <begin position="1"/>
        <end position="321"/>
    </location>
</feature>
<feature type="domain" description="Radical SAM core" evidence="2">
    <location>
        <begin position="80"/>
        <end position="297"/>
    </location>
</feature>
<feature type="binding site" evidence="1">
    <location>
        <position position="68"/>
    </location>
    <ligand>
        <name>[4Fe-4S] cluster</name>
        <dbReference type="ChEBI" id="CHEBI:49883"/>
        <label>1</label>
    </ligand>
</feature>
<feature type="binding site" evidence="1">
    <location>
        <position position="73"/>
    </location>
    <ligand>
        <name>[4Fe-4S] cluster</name>
        <dbReference type="ChEBI" id="CHEBI:49883"/>
        <label>1</label>
    </ligand>
</feature>
<feature type="binding site" evidence="1">
    <location>
        <position position="79"/>
    </location>
    <ligand>
        <name>[4Fe-4S] cluster</name>
        <dbReference type="ChEBI" id="CHEBI:49883"/>
        <label>1</label>
    </ligand>
</feature>
<feature type="binding site" evidence="1">
    <location>
        <position position="94"/>
    </location>
    <ligand>
        <name>[4Fe-4S] cluster</name>
        <dbReference type="ChEBI" id="CHEBI:49883"/>
        <label>2</label>
        <note>4Fe-4S-S-AdoMet</note>
    </ligand>
</feature>
<feature type="binding site" evidence="1">
    <location>
        <position position="98"/>
    </location>
    <ligand>
        <name>[4Fe-4S] cluster</name>
        <dbReference type="ChEBI" id="CHEBI:49883"/>
        <label>2</label>
        <note>4Fe-4S-S-AdoMet</note>
    </ligand>
</feature>
<feature type="binding site" evidence="1">
    <location>
        <position position="101"/>
    </location>
    <ligand>
        <name>[4Fe-4S] cluster</name>
        <dbReference type="ChEBI" id="CHEBI:49883"/>
        <label>2</label>
        <note>4Fe-4S-S-AdoMet</note>
    </ligand>
</feature>
<feature type="binding site" evidence="1">
    <location>
        <position position="308"/>
    </location>
    <ligand>
        <name>[4Fe-4S] cluster</name>
        <dbReference type="ChEBI" id="CHEBI:49883"/>
        <label>1</label>
    </ligand>
</feature>
<keyword id="KW-0004">4Fe-4S</keyword>
<keyword id="KW-0963">Cytoplasm</keyword>
<keyword id="KW-0408">Iron</keyword>
<keyword id="KW-0411">Iron-sulfur</keyword>
<keyword id="KW-0479">Metal-binding</keyword>
<keyword id="KW-0949">S-adenosyl-L-methionine</keyword>
<keyword id="KW-0808">Transferase</keyword>
<dbReference type="EC" id="2.8.1.8" evidence="1"/>
<dbReference type="EMBL" id="CP000886">
    <property type="protein sequence ID" value="ABX68286.1"/>
    <property type="molecule type" value="Genomic_DNA"/>
</dbReference>
<dbReference type="RefSeq" id="WP_000042640.1">
    <property type="nucleotide sequence ID" value="NC_010102.1"/>
</dbReference>
<dbReference type="SMR" id="A9MV74"/>
<dbReference type="KEGG" id="spq:SPAB_02922"/>
<dbReference type="PATRIC" id="fig|1016998.12.peg.2754"/>
<dbReference type="HOGENOM" id="CLU_033144_2_1_6"/>
<dbReference type="BioCyc" id="SENT1016998:SPAB_RS11900-MONOMER"/>
<dbReference type="UniPathway" id="UPA00538">
    <property type="reaction ID" value="UER00593"/>
</dbReference>
<dbReference type="Proteomes" id="UP000008556">
    <property type="component" value="Chromosome"/>
</dbReference>
<dbReference type="GO" id="GO:0005737">
    <property type="term" value="C:cytoplasm"/>
    <property type="evidence" value="ECO:0007669"/>
    <property type="project" value="UniProtKB-SubCell"/>
</dbReference>
<dbReference type="GO" id="GO:0051539">
    <property type="term" value="F:4 iron, 4 sulfur cluster binding"/>
    <property type="evidence" value="ECO:0007669"/>
    <property type="project" value="UniProtKB-UniRule"/>
</dbReference>
<dbReference type="GO" id="GO:0016992">
    <property type="term" value="F:lipoate synthase activity"/>
    <property type="evidence" value="ECO:0007669"/>
    <property type="project" value="UniProtKB-UniRule"/>
</dbReference>
<dbReference type="GO" id="GO:0046872">
    <property type="term" value="F:metal ion binding"/>
    <property type="evidence" value="ECO:0007669"/>
    <property type="project" value="UniProtKB-KW"/>
</dbReference>
<dbReference type="CDD" id="cd01335">
    <property type="entry name" value="Radical_SAM"/>
    <property type="match status" value="1"/>
</dbReference>
<dbReference type="FunFam" id="3.20.20.70:FF:000023">
    <property type="entry name" value="Lipoyl synthase"/>
    <property type="match status" value="1"/>
</dbReference>
<dbReference type="Gene3D" id="3.20.20.70">
    <property type="entry name" value="Aldolase class I"/>
    <property type="match status" value="1"/>
</dbReference>
<dbReference type="HAMAP" id="MF_00206">
    <property type="entry name" value="Lipoyl_synth"/>
    <property type="match status" value="1"/>
</dbReference>
<dbReference type="InterPro" id="IPR013785">
    <property type="entry name" value="Aldolase_TIM"/>
</dbReference>
<dbReference type="InterPro" id="IPR006638">
    <property type="entry name" value="Elp3/MiaA/NifB-like_rSAM"/>
</dbReference>
<dbReference type="InterPro" id="IPR031691">
    <property type="entry name" value="LIAS_N"/>
</dbReference>
<dbReference type="InterPro" id="IPR003698">
    <property type="entry name" value="Lipoyl_synth"/>
</dbReference>
<dbReference type="InterPro" id="IPR007197">
    <property type="entry name" value="rSAM"/>
</dbReference>
<dbReference type="NCBIfam" id="TIGR00510">
    <property type="entry name" value="lipA"/>
    <property type="match status" value="1"/>
</dbReference>
<dbReference type="NCBIfam" id="NF004019">
    <property type="entry name" value="PRK05481.1"/>
    <property type="match status" value="1"/>
</dbReference>
<dbReference type="NCBIfam" id="NF009544">
    <property type="entry name" value="PRK12928.1"/>
    <property type="match status" value="1"/>
</dbReference>
<dbReference type="PANTHER" id="PTHR10949">
    <property type="entry name" value="LIPOYL SYNTHASE"/>
    <property type="match status" value="1"/>
</dbReference>
<dbReference type="PANTHER" id="PTHR10949:SF0">
    <property type="entry name" value="LIPOYL SYNTHASE, MITOCHONDRIAL"/>
    <property type="match status" value="1"/>
</dbReference>
<dbReference type="Pfam" id="PF16881">
    <property type="entry name" value="LIAS_N"/>
    <property type="match status" value="1"/>
</dbReference>
<dbReference type="Pfam" id="PF04055">
    <property type="entry name" value="Radical_SAM"/>
    <property type="match status" value="1"/>
</dbReference>
<dbReference type="PIRSF" id="PIRSF005963">
    <property type="entry name" value="Lipoyl_synth"/>
    <property type="match status" value="1"/>
</dbReference>
<dbReference type="SFLD" id="SFLDF00271">
    <property type="entry name" value="lipoyl_synthase"/>
    <property type="match status" value="1"/>
</dbReference>
<dbReference type="SFLD" id="SFLDS00029">
    <property type="entry name" value="Radical_SAM"/>
    <property type="match status" value="1"/>
</dbReference>
<dbReference type="SMART" id="SM00729">
    <property type="entry name" value="Elp3"/>
    <property type="match status" value="1"/>
</dbReference>
<dbReference type="SUPFAM" id="SSF102114">
    <property type="entry name" value="Radical SAM enzymes"/>
    <property type="match status" value="1"/>
</dbReference>
<dbReference type="PROSITE" id="PS51918">
    <property type="entry name" value="RADICAL_SAM"/>
    <property type="match status" value="1"/>
</dbReference>
<evidence type="ECO:0000255" key="1">
    <source>
        <dbReference type="HAMAP-Rule" id="MF_00206"/>
    </source>
</evidence>
<evidence type="ECO:0000255" key="2">
    <source>
        <dbReference type="PROSITE-ProRule" id="PRU01266"/>
    </source>
</evidence>